<comment type="function">
    <text evidence="1">Involved in the anomeric conversion of L-rhamnose.</text>
</comment>
<comment type="catalytic activity">
    <reaction evidence="1">
        <text>alpha-L-rhamnose = beta-L-rhamnose</text>
        <dbReference type="Rhea" id="RHEA:25584"/>
        <dbReference type="ChEBI" id="CHEBI:27586"/>
        <dbReference type="ChEBI" id="CHEBI:27907"/>
        <dbReference type="EC" id="5.1.3.32"/>
    </reaction>
</comment>
<comment type="pathway">
    <text evidence="1">Carbohydrate metabolism; L-rhamnose metabolism.</text>
</comment>
<comment type="subunit">
    <text evidence="1">Homodimer.</text>
</comment>
<comment type="subcellular location">
    <subcellularLocation>
        <location evidence="1">Cytoplasm</location>
    </subcellularLocation>
</comment>
<comment type="similarity">
    <text evidence="1">Belongs to the rhamnose mutarotase family.</text>
</comment>
<sequence>MIRKAFVMQVNADAHEEYQRRHNPIWPELEAVLKSHGAHHYAIYLDQERNLLFATVEIESEERWNAVASTDVCQRWWKHMRDVMPANPDNSPVSAELKEVFYLQ</sequence>
<proteinExistence type="inferred from homology"/>
<accession>Q5PKG7</accession>
<keyword id="KW-0119">Carbohydrate metabolism</keyword>
<keyword id="KW-0963">Cytoplasm</keyword>
<keyword id="KW-0413">Isomerase</keyword>
<keyword id="KW-0684">Rhamnose metabolism</keyword>
<protein>
    <recommendedName>
        <fullName evidence="1">L-rhamnose mutarotase</fullName>
        <ecNumber evidence="1">5.1.3.32</ecNumber>
    </recommendedName>
    <alternativeName>
        <fullName evidence="1">Rhamnose 1-epimerase</fullName>
    </alternativeName>
    <alternativeName>
        <fullName evidence="1">Type-3 mutarotase</fullName>
    </alternativeName>
</protein>
<reference key="1">
    <citation type="journal article" date="2004" name="Nat. Genet.">
        <title>Comparison of genome degradation in Paratyphi A and Typhi, human-restricted serovars of Salmonella enterica that cause typhoid.</title>
        <authorList>
            <person name="McClelland M."/>
            <person name="Sanderson K.E."/>
            <person name="Clifton S.W."/>
            <person name="Latreille P."/>
            <person name="Porwollik S."/>
            <person name="Sabo A."/>
            <person name="Meyer R."/>
            <person name="Bieri T."/>
            <person name="Ozersky P."/>
            <person name="McLellan M."/>
            <person name="Harkins C.R."/>
            <person name="Wang C."/>
            <person name="Nguyen C."/>
            <person name="Berghoff A."/>
            <person name="Elliott G."/>
            <person name="Kohlberg S."/>
            <person name="Strong C."/>
            <person name="Du F."/>
            <person name="Carter J."/>
            <person name="Kremizki C."/>
            <person name="Layman D."/>
            <person name="Leonard S."/>
            <person name="Sun H."/>
            <person name="Fulton L."/>
            <person name="Nash W."/>
            <person name="Miner T."/>
            <person name="Minx P."/>
            <person name="Delehaunty K."/>
            <person name="Fronick C."/>
            <person name="Magrini V."/>
            <person name="Nhan M."/>
            <person name="Warren W."/>
            <person name="Florea L."/>
            <person name="Spieth J."/>
            <person name="Wilson R.K."/>
        </authorList>
    </citation>
    <scope>NUCLEOTIDE SEQUENCE [LARGE SCALE GENOMIC DNA]</scope>
    <source>
        <strain>ATCC 9150 / SARB42</strain>
    </source>
</reference>
<name>RHAM_SALPA</name>
<gene>
    <name evidence="1" type="primary">rhaM</name>
    <name type="ordered locus">SPA3886</name>
</gene>
<dbReference type="EC" id="5.1.3.32" evidence="1"/>
<dbReference type="EMBL" id="CP000026">
    <property type="protein sequence ID" value="AAV79652.1"/>
    <property type="molecule type" value="Genomic_DNA"/>
</dbReference>
<dbReference type="RefSeq" id="WP_000619478.1">
    <property type="nucleotide sequence ID" value="NC_006511.1"/>
</dbReference>
<dbReference type="SMR" id="Q5PKG7"/>
<dbReference type="KEGG" id="spt:SPA3886"/>
<dbReference type="HOGENOM" id="CLU_100689_2_0_6"/>
<dbReference type="UniPathway" id="UPA00125"/>
<dbReference type="Proteomes" id="UP000008185">
    <property type="component" value="Chromosome"/>
</dbReference>
<dbReference type="GO" id="GO:0005737">
    <property type="term" value="C:cytoplasm"/>
    <property type="evidence" value="ECO:0007669"/>
    <property type="project" value="UniProtKB-SubCell"/>
</dbReference>
<dbReference type="GO" id="GO:0062192">
    <property type="term" value="F:L-rhamnose mutarotase activity"/>
    <property type="evidence" value="ECO:0007669"/>
    <property type="project" value="UniProtKB-EC"/>
</dbReference>
<dbReference type="GO" id="GO:0019301">
    <property type="term" value="P:rhamnose catabolic process"/>
    <property type="evidence" value="ECO:0007669"/>
    <property type="project" value="TreeGrafter"/>
</dbReference>
<dbReference type="Gene3D" id="3.30.70.100">
    <property type="match status" value="1"/>
</dbReference>
<dbReference type="HAMAP" id="MF_01663">
    <property type="entry name" value="L_rham_rotase"/>
    <property type="match status" value="1"/>
</dbReference>
<dbReference type="InterPro" id="IPR011008">
    <property type="entry name" value="Dimeric_a/b-barrel"/>
</dbReference>
<dbReference type="InterPro" id="IPR013448">
    <property type="entry name" value="L-rhamnose_mutarotase"/>
</dbReference>
<dbReference type="InterPro" id="IPR008000">
    <property type="entry name" value="Rham/fucose_mutarotase"/>
</dbReference>
<dbReference type="NCBIfam" id="TIGR02625">
    <property type="entry name" value="YiiL_rotase"/>
    <property type="match status" value="1"/>
</dbReference>
<dbReference type="PANTHER" id="PTHR34389">
    <property type="entry name" value="L-RHAMNOSE MUTAROTASE"/>
    <property type="match status" value="1"/>
</dbReference>
<dbReference type="PANTHER" id="PTHR34389:SF2">
    <property type="entry name" value="L-RHAMNOSE MUTAROTASE"/>
    <property type="match status" value="1"/>
</dbReference>
<dbReference type="Pfam" id="PF05336">
    <property type="entry name" value="rhaM"/>
    <property type="match status" value="1"/>
</dbReference>
<dbReference type="SUPFAM" id="SSF54909">
    <property type="entry name" value="Dimeric alpha+beta barrel"/>
    <property type="match status" value="1"/>
</dbReference>
<evidence type="ECO:0000255" key="1">
    <source>
        <dbReference type="HAMAP-Rule" id="MF_01663"/>
    </source>
</evidence>
<feature type="chain" id="PRO_0000344600" description="L-rhamnose mutarotase">
    <location>
        <begin position="1"/>
        <end position="104"/>
    </location>
</feature>
<feature type="active site" description="Proton donor" evidence="1">
    <location>
        <position position="22"/>
    </location>
</feature>
<feature type="binding site" evidence="1">
    <location>
        <position position="18"/>
    </location>
    <ligand>
        <name>substrate</name>
    </ligand>
</feature>
<feature type="binding site" evidence="1">
    <location>
        <position position="41"/>
    </location>
    <ligand>
        <name>substrate</name>
    </ligand>
</feature>
<feature type="binding site" evidence="1">
    <location>
        <begin position="76"/>
        <end position="77"/>
    </location>
    <ligand>
        <name>substrate</name>
    </ligand>
</feature>
<organism>
    <name type="scientific">Salmonella paratyphi A (strain ATCC 9150 / SARB42)</name>
    <dbReference type="NCBI Taxonomy" id="295319"/>
    <lineage>
        <taxon>Bacteria</taxon>
        <taxon>Pseudomonadati</taxon>
        <taxon>Pseudomonadota</taxon>
        <taxon>Gammaproteobacteria</taxon>
        <taxon>Enterobacterales</taxon>
        <taxon>Enterobacteriaceae</taxon>
        <taxon>Salmonella</taxon>
    </lineage>
</organism>